<gene>
    <name evidence="1" type="primary">gppA</name>
    <name type="ordered locus">ECA4214</name>
</gene>
<keyword id="KW-0378">Hydrolase</keyword>
<keyword id="KW-1185">Reference proteome</keyword>
<evidence type="ECO:0000255" key="1">
    <source>
        <dbReference type="HAMAP-Rule" id="MF_01550"/>
    </source>
</evidence>
<accession>Q6CZD8</accession>
<name>GPPA_PECAS</name>
<reference key="1">
    <citation type="journal article" date="2004" name="Proc. Natl. Acad. Sci. U.S.A.">
        <title>Genome sequence of the enterobacterial phytopathogen Erwinia carotovora subsp. atroseptica and characterization of virulence factors.</title>
        <authorList>
            <person name="Bell K.S."/>
            <person name="Sebaihia M."/>
            <person name="Pritchard L."/>
            <person name="Holden M.T.G."/>
            <person name="Hyman L.J."/>
            <person name="Holeva M.C."/>
            <person name="Thomson N.R."/>
            <person name="Bentley S.D."/>
            <person name="Churcher L.J.C."/>
            <person name="Mungall K."/>
            <person name="Atkin R."/>
            <person name="Bason N."/>
            <person name="Brooks K."/>
            <person name="Chillingworth T."/>
            <person name="Clark K."/>
            <person name="Doggett J."/>
            <person name="Fraser A."/>
            <person name="Hance Z."/>
            <person name="Hauser H."/>
            <person name="Jagels K."/>
            <person name="Moule S."/>
            <person name="Norbertczak H."/>
            <person name="Ormond D."/>
            <person name="Price C."/>
            <person name="Quail M.A."/>
            <person name="Sanders M."/>
            <person name="Walker D."/>
            <person name="Whitehead S."/>
            <person name="Salmond G.P.C."/>
            <person name="Birch P.R.J."/>
            <person name="Parkhill J."/>
            <person name="Toth I.K."/>
        </authorList>
    </citation>
    <scope>NUCLEOTIDE SEQUENCE [LARGE SCALE GENOMIC DNA]</scope>
    <source>
        <strain>SCRI 1043 / ATCC BAA-672</strain>
    </source>
</reference>
<sequence length="498" mass="55719">MLSSSSLYAAIDLGSNSFHMLVTRETAGSIQTLAKIKRKVRLAAGLDKQNRLSQEAMQRGWQCLQLFSERLQDIPQDQVRVVATATLRLATNADEFLQRAQEILGLPIQVISGEEEARLIYQGVAHTTGGPDARLVVDIGGGSTELATGIGAKTTQLISLPMGCVTWLDRYFSDRNLEAGNFERAENAAREMLRPVAASLREQGWQICVGASGTVQALQEIMVAQGMDEYITLPKLRQLKEHAIQCDKLEELEIDGLTLERALVFPSGLAILLAIFQELDIKTMTLAGGALREGLVYGMLHLPVDQDIRHRTLATLQRRYLLDTEQAKRVSTLADNFLQQVARDWQLDSRCRELLRSACMVHEIGLSIDFRQSPQHAAYLIRHSDLPGFTPAQKKLLATLLQNQINPIDLMPLSQQNALPVNQAQHLCRLLRLAIIFASRRRDDTLPAVRLRVEGEALRLILPAGWLAQHPLRAEMLEQESRWQSYVHWPLMLEEAPA</sequence>
<comment type="function">
    <text evidence="1">Catalyzes the conversion of pppGpp to ppGpp. Guanosine pentaphosphate (pppGpp) is a cytoplasmic signaling molecule which together with ppGpp controls the 'stringent response', an adaptive process that allows bacteria to respond to amino acid starvation, resulting in the coordinated regulation of numerous cellular activities.</text>
</comment>
<comment type="catalytic activity">
    <reaction evidence="1">
        <text>guanosine 3'-diphosphate 5'-triphosphate + H2O = guanosine 3',5'-bis(diphosphate) + phosphate + H(+)</text>
        <dbReference type="Rhea" id="RHEA:13073"/>
        <dbReference type="ChEBI" id="CHEBI:15377"/>
        <dbReference type="ChEBI" id="CHEBI:15378"/>
        <dbReference type="ChEBI" id="CHEBI:43474"/>
        <dbReference type="ChEBI" id="CHEBI:77828"/>
        <dbReference type="ChEBI" id="CHEBI:142410"/>
        <dbReference type="EC" id="3.6.1.40"/>
    </reaction>
</comment>
<comment type="pathway">
    <text evidence="1">Purine metabolism; ppGpp biosynthesis; ppGpp from GTP: step 2/2.</text>
</comment>
<comment type="similarity">
    <text evidence="1">Belongs to the GppA/Ppx family. GppA subfamily.</text>
</comment>
<organism>
    <name type="scientific">Pectobacterium atrosepticum (strain SCRI 1043 / ATCC BAA-672)</name>
    <name type="common">Erwinia carotovora subsp. atroseptica</name>
    <dbReference type="NCBI Taxonomy" id="218491"/>
    <lineage>
        <taxon>Bacteria</taxon>
        <taxon>Pseudomonadati</taxon>
        <taxon>Pseudomonadota</taxon>
        <taxon>Gammaproteobacteria</taxon>
        <taxon>Enterobacterales</taxon>
        <taxon>Pectobacteriaceae</taxon>
        <taxon>Pectobacterium</taxon>
    </lineage>
</organism>
<protein>
    <recommendedName>
        <fullName evidence="1">Guanosine-5'-triphosphate,3'-diphosphate pyrophosphatase</fullName>
        <ecNumber evidence="1">3.6.1.40</ecNumber>
    </recommendedName>
    <alternativeName>
        <fullName evidence="1">Guanosine pentaphosphate phosphohydrolase</fullName>
    </alternativeName>
    <alternativeName>
        <fullName evidence="1">pppGpp-5'-phosphohydrolase</fullName>
    </alternativeName>
</protein>
<proteinExistence type="inferred from homology"/>
<feature type="chain" id="PRO_0000194279" description="Guanosine-5'-triphosphate,3'-diphosphate pyrophosphatase">
    <location>
        <begin position="1"/>
        <end position="498"/>
    </location>
</feature>
<dbReference type="EC" id="3.6.1.40" evidence="1"/>
<dbReference type="EMBL" id="BX950851">
    <property type="protein sequence ID" value="CAG77111.1"/>
    <property type="molecule type" value="Genomic_DNA"/>
</dbReference>
<dbReference type="SMR" id="Q6CZD8"/>
<dbReference type="STRING" id="218491.ECA4214"/>
<dbReference type="KEGG" id="eca:ECA4214"/>
<dbReference type="PATRIC" id="fig|218491.5.peg.4290"/>
<dbReference type="eggNOG" id="COG0248">
    <property type="taxonomic scope" value="Bacteria"/>
</dbReference>
<dbReference type="HOGENOM" id="CLU_025908_4_0_6"/>
<dbReference type="OrthoDB" id="9793035at2"/>
<dbReference type="UniPathway" id="UPA00908">
    <property type="reaction ID" value="UER00885"/>
</dbReference>
<dbReference type="Proteomes" id="UP000007966">
    <property type="component" value="Chromosome"/>
</dbReference>
<dbReference type="GO" id="GO:0004309">
    <property type="term" value="F:exopolyphosphatase activity"/>
    <property type="evidence" value="ECO:0007669"/>
    <property type="project" value="InterPro"/>
</dbReference>
<dbReference type="GO" id="GO:0008894">
    <property type="term" value="F:guanosine-5'-triphosphate,3'-diphosphate diphosphatase activity"/>
    <property type="evidence" value="ECO:0007669"/>
    <property type="project" value="UniProtKB-UniRule"/>
</dbReference>
<dbReference type="GO" id="GO:0015974">
    <property type="term" value="P:guanosine pentaphosphate catabolic process"/>
    <property type="evidence" value="ECO:0007669"/>
    <property type="project" value="InterPro"/>
</dbReference>
<dbReference type="GO" id="GO:0015970">
    <property type="term" value="P:guanosine tetraphosphate biosynthetic process"/>
    <property type="evidence" value="ECO:0007669"/>
    <property type="project" value="UniProtKB-UniRule"/>
</dbReference>
<dbReference type="GO" id="GO:0015949">
    <property type="term" value="P:nucleobase-containing small molecule interconversion"/>
    <property type="evidence" value="ECO:0007669"/>
    <property type="project" value="TreeGrafter"/>
</dbReference>
<dbReference type="CDD" id="cd24117">
    <property type="entry name" value="ASKHA_NBD_EcGppA-like"/>
    <property type="match status" value="1"/>
</dbReference>
<dbReference type="FunFam" id="1.10.3210.10:FF:000004">
    <property type="entry name" value="Guanosine-5'-triphosphate,3'-diphosphate pyrophosphatase"/>
    <property type="match status" value="1"/>
</dbReference>
<dbReference type="FunFam" id="3.30.420.150:FF:000001">
    <property type="entry name" value="Guanosine-5'-triphosphate,3'-diphosphate pyrophosphatase"/>
    <property type="match status" value="1"/>
</dbReference>
<dbReference type="FunFam" id="3.30.420.40:FF:000023">
    <property type="entry name" value="Guanosine-5'-triphosphate,3'-diphosphate pyrophosphatase"/>
    <property type="match status" value="1"/>
</dbReference>
<dbReference type="Gene3D" id="3.30.420.40">
    <property type="match status" value="1"/>
</dbReference>
<dbReference type="Gene3D" id="3.30.420.150">
    <property type="entry name" value="Exopolyphosphatase. Domain 2"/>
    <property type="match status" value="1"/>
</dbReference>
<dbReference type="Gene3D" id="1.10.3210.10">
    <property type="entry name" value="Hypothetical protein af1432"/>
    <property type="match status" value="1"/>
</dbReference>
<dbReference type="HAMAP" id="MF_01550">
    <property type="entry name" value="GppA"/>
    <property type="match status" value="1"/>
</dbReference>
<dbReference type="InterPro" id="IPR043129">
    <property type="entry name" value="ATPase_NBD"/>
</dbReference>
<dbReference type="InterPro" id="IPR022371">
    <property type="entry name" value="Exopolyphosphatase"/>
</dbReference>
<dbReference type="InterPro" id="IPR050273">
    <property type="entry name" value="GppA/Ppx_hydrolase"/>
</dbReference>
<dbReference type="InterPro" id="IPR023709">
    <property type="entry name" value="Guo-5TP_3DP_PyrP"/>
</dbReference>
<dbReference type="InterPro" id="IPR048950">
    <property type="entry name" value="Ppx_GppA_C"/>
</dbReference>
<dbReference type="InterPro" id="IPR003695">
    <property type="entry name" value="Ppx_GppA_N"/>
</dbReference>
<dbReference type="InterPro" id="IPR030673">
    <property type="entry name" value="PyroPPase_GppA_Ppx"/>
</dbReference>
<dbReference type="NCBIfam" id="TIGR03706">
    <property type="entry name" value="exo_poly_only"/>
    <property type="match status" value="1"/>
</dbReference>
<dbReference type="NCBIfam" id="NF008260">
    <property type="entry name" value="PRK11031.1"/>
    <property type="match status" value="1"/>
</dbReference>
<dbReference type="PANTHER" id="PTHR30005">
    <property type="entry name" value="EXOPOLYPHOSPHATASE"/>
    <property type="match status" value="1"/>
</dbReference>
<dbReference type="PANTHER" id="PTHR30005:SF0">
    <property type="entry name" value="RETROGRADE REGULATION PROTEIN 2"/>
    <property type="match status" value="1"/>
</dbReference>
<dbReference type="Pfam" id="PF02541">
    <property type="entry name" value="Ppx-GppA"/>
    <property type="match status" value="1"/>
</dbReference>
<dbReference type="Pfam" id="PF21447">
    <property type="entry name" value="Ppx-GppA_III"/>
    <property type="match status" value="1"/>
</dbReference>
<dbReference type="PIRSF" id="PIRSF001267">
    <property type="entry name" value="Pyrophosphatase_GppA_Ppx"/>
    <property type="match status" value="1"/>
</dbReference>
<dbReference type="SUPFAM" id="SSF53067">
    <property type="entry name" value="Actin-like ATPase domain"/>
    <property type="match status" value="2"/>
</dbReference>
<dbReference type="SUPFAM" id="SSF109604">
    <property type="entry name" value="HD-domain/PDEase-like"/>
    <property type="match status" value="1"/>
</dbReference>